<feature type="chain" id="PRO_0000288895" description="Putative universal stress protein SA1532">
    <location>
        <begin position="1"/>
        <end position="166"/>
    </location>
</feature>
<reference key="1">
    <citation type="journal article" date="2001" name="Lancet">
        <title>Whole genome sequencing of meticillin-resistant Staphylococcus aureus.</title>
        <authorList>
            <person name="Kuroda M."/>
            <person name="Ohta T."/>
            <person name="Uchiyama I."/>
            <person name="Baba T."/>
            <person name="Yuzawa H."/>
            <person name="Kobayashi I."/>
            <person name="Cui L."/>
            <person name="Oguchi A."/>
            <person name="Aoki K."/>
            <person name="Nagai Y."/>
            <person name="Lian J.-Q."/>
            <person name="Ito T."/>
            <person name="Kanamori M."/>
            <person name="Matsumaru H."/>
            <person name="Maruyama A."/>
            <person name="Murakami H."/>
            <person name="Hosoyama A."/>
            <person name="Mizutani-Ui Y."/>
            <person name="Takahashi N.K."/>
            <person name="Sawano T."/>
            <person name="Inoue R."/>
            <person name="Kaito C."/>
            <person name="Sekimizu K."/>
            <person name="Hirakawa H."/>
            <person name="Kuhara S."/>
            <person name="Goto S."/>
            <person name="Yabuzaki J."/>
            <person name="Kanehisa M."/>
            <person name="Yamashita A."/>
            <person name="Oshima K."/>
            <person name="Furuya K."/>
            <person name="Yoshino C."/>
            <person name="Shiba T."/>
            <person name="Hattori M."/>
            <person name="Ogasawara N."/>
            <person name="Hayashi H."/>
            <person name="Hiramatsu K."/>
        </authorList>
    </citation>
    <scope>NUCLEOTIDE SEQUENCE [LARGE SCALE GENOMIC DNA]</scope>
    <source>
        <strain>N315</strain>
    </source>
</reference>
<reference key="2">
    <citation type="journal article" date="2005" name="J. Microbiol. Methods">
        <title>Correlation of proteomic and transcriptomic profiles of Staphylococcus aureus during the post-exponential phase of growth.</title>
        <authorList>
            <person name="Scherl A."/>
            <person name="Francois P."/>
            <person name="Bento M."/>
            <person name="Deshusses J.M."/>
            <person name="Charbonnier Y."/>
            <person name="Converset V."/>
            <person name="Huyghe A."/>
            <person name="Walter N."/>
            <person name="Hoogland C."/>
            <person name="Appel R.D."/>
            <person name="Sanchez J.-C."/>
            <person name="Zimmermann-Ivol C.G."/>
            <person name="Corthals G.L."/>
            <person name="Hochstrasser D.F."/>
            <person name="Schrenzel J."/>
        </authorList>
    </citation>
    <scope>IDENTIFICATION BY MASS SPECTROMETRY</scope>
    <source>
        <strain>N315</strain>
    </source>
</reference>
<reference key="3">
    <citation type="submission" date="2007-10" db="UniProtKB">
        <title>Shotgun proteomic analysis of total and membrane protein extracts of S. aureus strain N315.</title>
        <authorList>
            <person name="Vaezzadeh A.R."/>
            <person name="Deshusses J."/>
            <person name="Lescuyer P."/>
            <person name="Hochstrasser D.F."/>
        </authorList>
    </citation>
    <scope>IDENTIFICATION BY MASS SPECTROMETRY [LARGE SCALE ANALYSIS]</scope>
    <source>
        <strain>N315</strain>
    </source>
</reference>
<sequence length="166" mass="18475">MITYKNILIAVDGSHEAEWAFNRAVGVAKRNDAKLTIVNVIDSRTYSSYEVYDAQFTEKSKHFAEELLNGYKEVATNAGVKDVETRLEFGSPKSIIPKKLAHEINADLIMSGTSGLNAVERFIVGSVSESIVRHAPCDVLVVRTEELPADFQPQVATTQLREKYQN</sequence>
<accession>Q7A551</accession>
<comment type="subcellular location">
    <subcellularLocation>
        <location evidence="1">Cytoplasm</location>
    </subcellularLocation>
</comment>
<comment type="similarity">
    <text evidence="2">Belongs to the universal stress protein A family.</text>
</comment>
<name>Y1532_STAAN</name>
<proteinExistence type="evidence at protein level"/>
<protein>
    <recommendedName>
        <fullName>Putative universal stress protein SA1532</fullName>
    </recommendedName>
</protein>
<gene>
    <name type="ordered locus">SA1532</name>
</gene>
<evidence type="ECO:0000250" key="1"/>
<evidence type="ECO:0000305" key="2"/>
<organism>
    <name type="scientific">Staphylococcus aureus (strain N315)</name>
    <dbReference type="NCBI Taxonomy" id="158879"/>
    <lineage>
        <taxon>Bacteria</taxon>
        <taxon>Bacillati</taxon>
        <taxon>Bacillota</taxon>
        <taxon>Bacilli</taxon>
        <taxon>Bacillales</taxon>
        <taxon>Staphylococcaceae</taxon>
        <taxon>Staphylococcus</taxon>
    </lineage>
</organism>
<dbReference type="EMBL" id="BA000018">
    <property type="protein sequence ID" value="BAB42799.1"/>
    <property type="molecule type" value="Genomic_DNA"/>
</dbReference>
<dbReference type="PIR" id="B89955">
    <property type="entry name" value="B89955"/>
</dbReference>
<dbReference type="RefSeq" id="WP_000634175.1">
    <property type="nucleotide sequence ID" value="NC_002745.2"/>
</dbReference>
<dbReference type="SMR" id="Q7A551"/>
<dbReference type="EnsemblBacteria" id="BAB42799">
    <property type="protein sequence ID" value="BAB42799"/>
    <property type="gene ID" value="BAB42799"/>
</dbReference>
<dbReference type="KEGG" id="sau:SA1532"/>
<dbReference type="HOGENOM" id="CLU_049301_16_0_9"/>
<dbReference type="GO" id="GO:0005737">
    <property type="term" value="C:cytoplasm"/>
    <property type="evidence" value="ECO:0007669"/>
    <property type="project" value="UniProtKB-SubCell"/>
</dbReference>
<dbReference type="CDD" id="cd00293">
    <property type="entry name" value="USP-like"/>
    <property type="match status" value="1"/>
</dbReference>
<dbReference type="Gene3D" id="3.40.50.620">
    <property type="entry name" value="HUPs"/>
    <property type="match status" value="1"/>
</dbReference>
<dbReference type="InterPro" id="IPR014729">
    <property type="entry name" value="Rossmann-like_a/b/a_fold"/>
</dbReference>
<dbReference type="InterPro" id="IPR006015">
    <property type="entry name" value="Universal_stress_UspA"/>
</dbReference>
<dbReference type="InterPro" id="IPR006016">
    <property type="entry name" value="UspA"/>
</dbReference>
<dbReference type="PANTHER" id="PTHR46268">
    <property type="entry name" value="STRESS RESPONSE PROTEIN NHAX"/>
    <property type="match status" value="1"/>
</dbReference>
<dbReference type="PANTHER" id="PTHR46268:SF6">
    <property type="entry name" value="UNIVERSAL STRESS PROTEIN UP12"/>
    <property type="match status" value="1"/>
</dbReference>
<dbReference type="Pfam" id="PF00582">
    <property type="entry name" value="Usp"/>
    <property type="match status" value="1"/>
</dbReference>
<dbReference type="PIRSF" id="PIRSF006276">
    <property type="entry name" value="UspA"/>
    <property type="match status" value="1"/>
</dbReference>
<dbReference type="PRINTS" id="PR01438">
    <property type="entry name" value="UNVRSLSTRESS"/>
</dbReference>
<dbReference type="SUPFAM" id="SSF52402">
    <property type="entry name" value="Adenine nucleotide alpha hydrolases-like"/>
    <property type="match status" value="1"/>
</dbReference>
<keyword id="KW-0963">Cytoplasm</keyword>